<comment type="function">
    <text evidence="1">Bifunctional enzyme which can phosphorylate or dephosphorylate isocitrate dehydrogenase (IDH) on a specific serine residue. This is a regulatory mechanism which enables bacteria to bypass the Krebs cycle via the glyoxylate shunt in response to the source of carbon. When bacteria are grown on glucose, IDH is fully active and unphosphorylated, but when grown on acetate or ethanol, the activity of IDH declines drastically concomitant with its phosphorylation.</text>
</comment>
<comment type="catalytic activity">
    <reaction evidence="1">
        <text>L-seryl-[isocitrate dehydrogenase] + ATP = O-phospho-L-seryl-[isocitrate dehydrogenase] + ADP + H(+)</text>
        <dbReference type="Rhea" id="RHEA:43540"/>
        <dbReference type="Rhea" id="RHEA-COMP:10605"/>
        <dbReference type="Rhea" id="RHEA-COMP:10606"/>
        <dbReference type="ChEBI" id="CHEBI:15378"/>
        <dbReference type="ChEBI" id="CHEBI:29999"/>
        <dbReference type="ChEBI" id="CHEBI:30616"/>
        <dbReference type="ChEBI" id="CHEBI:83421"/>
        <dbReference type="ChEBI" id="CHEBI:456216"/>
        <dbReference type="EC" id="2.7.11.5"/>
    </reaction>
</comment>
<comment type="subcellular location">
    <subcellularLocation>
        <location evidence="1">Cytoplasm</location>
    </subcellularLocation>
</comment>
<comment type="similarity">
    <text evidence="1">Belongs to the AceK family.</text>
</comment>
<accession>A1V827</accession>
<feature type="chain" id="PRO_1000046549" description="Isocitrate dehydrogenase kinase/phosphatase">
    <location>
        <begin position="1"/>
        <end position="603"/>
    </location>
</feature>
<feature type="active site" evidence="1">
    <location>
        <position position="383"/>
    </location>
</feature>
<feature type="binding site" evidence="1">
    <location>
        <begin position="327"/>
        <end position="333"/>
    </location>
    <ligand>
        <name>ATP</name>
        <dbReference type="ChEBI" id="CHEBI:30616"/>
    </ligand>
</feature>
<feature type="binding site" evidence="1">
    <location>
        <position position="348"/>
    </location>
    <ligand>
        <name>ATP</name>
        <dbReference type="ChEBI" id="CHEBI:30616"/>
    </ligand>
</feature>
<reference key="1">
    <citation type="journal article" date="2010" name="Genome Biol. Evol.">
        <title>Continuing evolution of Burkholderia mallei through genome reduction and large-scale rearrangements.</title>
        <authorList>
            <person name="Losada L."/>
            <person name="Ronning C.M."/>
            <person name="DeShazer D."/>
            <person name="Woods D."/>
            <person name="Fedorova N."/>
            <person name="Kim H.S."/>
            <person name="Shabalina S.A."/>
            <person name="Pearson T.R."/>
            <person name="Brinkac L."/>
            <person name="Tan P."/>
            <person name="Nandi T."/>
            <person name="Crabtree J."/>
            <person name="Badger J."/>
            <person name="Beckstrom-Sternberg S."/>
            <person name="Saqib M."/>
            <person name="Schutzer S.E."/>
            <person name="Keim P."/>
            <person name="Nierman W.C."/>
        </authorList>
    </citation>
    <scope>NUCLEOTIDE SEQUENCE [LARGE SCALE GENOMIC DNA]</scope>
    <source>
        <strain>SAVP1</strain>
    </source>
</reference>
<sequence length="603" mass="69894">MNHFPKLLSSQIGFDVAQTILENFDRHYRIFREAAVEAKDLFERADWHGLQRLARERITSYDDRVRECVELLEDEYDAENIDNEVWPQIKLHYIGLLTSHRQPECAETFFNSVCCKILHRAYFNNDFIFVRPAISTEYIENDEPAAKPTYRAYYPGSEGLAATLERIVTNFQLNPPFEDLERDIACIMQAIHDEFGAFDEAVNFQIHVLSSLFYRNKTAYVVGRIINGDRVLPFAVPIRHARAGILALDTVLLRRDQLKIIFSFSHSYFLVDMNVPSAYVQFLRSIMPGKPKAEIYTSVGLQKQGKNLFYRDLLHHLSHSSDRFIVAPGIKGLVMLVFTLPSFPYVFKMIKDHFPPPKDTTREQIMAKYLLVKRHDRLGRMADTLEYSSVALPLARLDDALVRELEKEVPSLIEYEGENLVIKHLYIERRMVPLNLYLQNGSDAEIEHGVREYGNAVKELMQANIFPGDMLYKNFGVTRHGRVVFYDYDEIEYLTDCNVRRVPPPRNDEDEMSGEPWYTVGPHDIFPETYAPFLLGDPRVREHFLAHHADFFDPQLWQDSKDRLLRGELPDFFAYEPALRFCIRYPERFAPGDAADGGKLAAA</sequence>
<keyword id="KW-0067">ATP-binding</keyword>
<keyword id="KW-0963">Cytoplasm</keyword>
<keyword id="KW-0329">Glyoxylate bypass</keyword>
<keyword id="KW-0378">Hydrolase</keyword>
<keyword id="KW-0418">Kinase</keyword>
<keyword id="KW-0547">Nucleotide-binding</keyword>
<keyword id="KW-0904">Protein phosphatase</keyword>
<keyword id="KW-0723">Serine/threonine-protein kinase</keyword>
<keyword id="KW-0808">Transferase</keyword>
<keyword id="KW-0816">Tricarboxylic acid cycle</keyword>
<evidence type="ECO:0000255" key="1">
    <source>
        <dbReference type="HAMAP-Rule" id="MF_00747"/>
    </source>
</evidence>
<proteinExistence type="inferred from homology"/>
<gene>
    <name evidence="1" type="primary">aceK</name>
    <name type="ordered locus">BMASAVP1_A3087</name>
</gene>
<protein>
    <recommendedName>
        <fullName evidence="1">Isocitrate dehydrogenase kinase/phosphatase</fullName>
        <shortName evidence="1">IDH kinase/phosphatase</shortName>
        <shortName evidence="1">IDHK/P</shortName>
        <ecNumber evidence="1">2.7.11.5</ecNumber>
        <ecNumber evidence="1">3.1.3.-</ecNumber>
    </recommendedName>
</protein>
<dbReference type="EC" id="2.7.11.5" evidence="1"/>
<dbReference type="EC" id="3.1.3.-" evidence="1"/>
<dbReference type="EMBL" id="CP000526">
    <property type="protein sequence ID" value="ABM49522.1"/>
    <property type="molecule type" value="Genomic_DNA"/>
</dbReference>
<dbReference type="RefSeq" id="WP_004525974.1">
    <property type="nucleotide sequence ID" value="NC_008785.1"/>
</dbReference>
<dbReference type="SMR" id="A1V827"/>
<dbReference type="GeneID" id="93058891"/>
<dbReference type="KEGG" id="bmv:BMASAVP1_A3087"/>
<dbReference type="HOGENOM" id="CLU_033804_1_1_4"/>
<dbReference type="GO" id="GO:0005737">
    <property type="term" value="C:cytoplasm"/>
    <property type="evidence" value="ECO:0007669"/>
    <property type="project" value="UniProtKB-SubCell"/>
</dbReference>
<dbReference type="GO" id="GO:0008772">
    <property type="term" value="F:[isocitrate dehydrogenase (NADP+)] kinase activity"/>
    <property type="evidence" value="ECO:0007669"/>
    <property type="project" value="UniProtKB-UniRule"/>
</dbReference>
<dbReference type="GO" id="GO:0016208">
    <property type="term" value="F:AMP binding"/>
    <property type="evidence" value="ECO:0007669"/>
    <property type="project" value="TreeGrafter"/>
</dbReference>
<dbReference type="GO" id="GO:0005524">
    <property type="term" value="F:ATP binding"/>
    <property type="evidence" value="ECO:0007669"/>
    <property type="project" value="UniProtKB-UniRule"/>
</dbReference>
<dbReference type="GO" id="GO:0004721">
    <property type="term" value="F:phosphoprotein phosphatase activity"/>
    <property type="evidence" value="ECO:0007669"/>
    <property type="project" value="UniProtKB-KW"/>
</dbReference>
<dbReference type="GO" id="GO:0004674">
    <property type="term" value="F:protein serine/threonine kinase activity"/>
    <property type="evidence" value="ECO:0007669"/>
    <property type="project" value="UniProtKB-KW"/>
</dbReference>
<dbReference type="GO" id="GO:0006006">
    <property type="term" value="P:glucose metabolic process"/>
    <property type="evidence" value="ECO:0007669"/>
    <property type="project" value="InterPro"/>
</dbReference>
<dbReference type="GO" id="GO:0006097">
    <property type="term" value="P:glyoxylate cycle"/>
    <property type="evidence" value="ECO:0007669"/>
    <property type="project" value="UniProtKB-UniRule"/>
</dbReference>
<dbReference type="GO" id="GO:0006099">
    <property type="term" value="P:tricarboxylic acid cycle"/>
    <property type="evidence" value="ECO:0007669"/>
    <property type="project" value="UniProtKB-UniRule"/>
</dbReference>
<dbReference type="HAMAP" id="MF_00747">
    <property type="entry name" value="AceK"/>
    <property type="match status" value="1"/>
</dbReference>
<dbReference type="InterPro" id="IPR046855">
    <property type="entry name" value="AceK_kinase"/>
</dbReference>
<dbReference type="InterPro" id="IPR046854">
    <property type="entry name" value="AceK_regulatory"/>
</dbReference>
<dbReference type="InterPro" id="IPR010452">
    <property type="entry name" value="Isocitrate_DH_AceK"/>
</dbReference>
<dbReference type="NCBIfam" id="NF002804">
    <property type="entry name" value="PRK02946.1"/>
    <property type="match status" value="1"/>
</dbReference>
<dbReference type="PANTHER" id="PTHR39559">
    <property type="match status" value="1"/>
</dbReference>
<dbReference type="PANTHER" id="PTHR39559:SF1">
    <property type="entry name" value="ISOCITRATE DEHYDROGENASE KINASE_PHOSPHATASE"/>
    <property type="match status" value="1"/>
</dbReference>
<dbReference type="Pfam" id="PF06315">
    <property type="entry name" value="AceK_kinase"/>
    <property type="match status" value="1"/>
</dbReference>
<dbReference type="Pfam" id="PF20423">
    <property type="entry name" value="AceK_regulatory"/>
    <property type="match status" value="1"/>
</dbReference>
<dbReference type="PIRSF" id="PIRSF000719">
    <property type="entry name" value="AceK"/>
    <property type="match status" value="1"/>
</dbReference>
<name>ACEK_BURMS</name>
<organism>
    <name type="scientific">Burkholderia mallei (strain SAVP1)</name>
    <dbReference type="NCBI Taxonomy" id="320388"/>
    <lineage>
        <taxon>Bacteria</taxon>
        <taxon>Pseudomonadati</taxon>
        <taxon>Pseudomonadota</taxon>
        <taxon>Betaproteobacteria</taxon>
        <taxon>Burkholderiales</taxon>
        <taxon>Burkholderiaceae</taxon>
        <taxon>Burkholderia</taxon>
        <taxon>pseudomallei group</taxon>
    </lineage>
</organism>